<dbReference type="EMBL" id="AE006914">
    <property type="protein sequence ID" value="AAL03011.1"/>
    <property type="molecule type" value="Genomic_DNA"/>
</dbReference>
<dbReference type="PIR" id="A97759">
    <property type="entry name" value="A97759"/>
</dbReference>
<dbReference type="RefSeq" id="WP_010977116.1">
    <property type="nucleotide sequence ID" value="NC_003103.1"/>
</dbReference>
<dbReference type="SMR" id="Q92IE7"/>
<dbReference type="GeneID" id="927603"/>
<dbReference type="KEGG" id="rco:RC0473"/>
<dbReference type="PATRIC" id="fig|272944.4.peg.542"/>
<dbReference type="HOGENOM" id="CLU_077636_0_1_5"/>
<dbReference type="Proteomes" id="UP000000816">
    <property type="component" value="Chromosome"/>
</dbReference>
<dbReference type="GO" id="GO:0005737">
    <property type="term" value="C:cytoplasm"/>
    <property type="evidence" value="ECO:0007669"/>
    <property type="project" value="UniProtKB-SubCell"/>
</dbReference>
<dbReference type="GO" id="GO:0005840">
    <property type="term" value="C:ribosome"/>
    <property type="evidence" value="ECO:0007669"/>
    <property type="project" value="InterPro"/>
</dbReference>
<dbReference type="GO" id="GO:0043022">
    <property type="term" value="F:ribosome binding"/>
    <property type="evidence" value="ECO:0007669"/>
    <property type="project" value="InterPro"/>
</dbReference>
<dbReference type="GO" id="GO:0042274">
    <property type="term" value="P:ribosomal small subunit biogenesis"/>
    <property type="evidence" value="ECO:0007669"/>
    <property type="project" value="UniProtKB-UniRule"/>
</dbReference>
<dbReference type="GO" id="GO:0006364">
    <property type="term" value="P:rRNA processing"/>
    <property type="evidence" value="ECO:0007669"/>
    <property type="project" value="UniProtKB-UniRule"/>
</dbReference>
<dbReference type="Gene3D" id="2.30.30.240">
    <property type="entry name" value="PRC-barrel domain"/>
    <property type="match status" value="1"/>
</dbReference>
<dbReference type="Gene3D" id="2.40.30.60">
    <property type="entry name" value="RimM"/>
    <property type="match status" value="1"/>
</dbReference>
<dbReference type="HAMAP" id="MF_00014">
    <property type="entry name" value="Ribosome_mat_RimM"/>
    <property type="match status" value="1"/>
</dbReference>
<dbReference type="InterPro" id="IPR027275">
    <property type="entry name" value="PRC-brl_dom"/>
</dbReference>
<dbReference type="InterPro" id="IPR011033">
    <property type="entry name" value="PRC_barrel-like_sf"/>
</dbReference>
<dbReference type="InterPro" id="IPR011961">
    <property type="entry name" value="RimM"/>
</dbReference>
<dbReference type="InterPro" id="IPR002676">
    <property type="entry name" value="RimM_N"/>
</dbReference>
<dbReference type="InterPro" id="IPR036976">
    <property type="entry name" value="RimM_N_sf"/>
</dbReference>
<dbReference type="InterPro" id="IPR009000">
    <property type="entry name" value="Transl_B-barrel_sf"/>
</dbReference>
<dbReference type="NCBIfam" id="TIGR02273">
    <property type="entry name" value="16S_RimM"/>
    <property type="match status" value="1"/>
</dbReference>
<dbReference type="PANTHER" id="PTHR33692">
    <property type="entry name" value="RIBOSOME MATURATION FACTOR RIMM"/>
    <property type="match status" value="1"/>
</dbReference>
<dbReference type="PANTHER" id="PTHR33692:SF1">
    <property type="entry name" value="RIBOSOME MATURATION FACTOR RIMM"/>
    <property type="match status" value="1"/>
</dbReference>
<dbReference type="Pfam" id="PF05239">
    <property type="entry name" value="PRC"/>
    <property type="match status" value="1"/>
</dbReference>
<dbReference type="Pfam" id="PF01782">
    <property type="entry name" value="RimM"/>
    <property type="match status" value="1"/>
</dbReference>
<dbReference type="SUPFAM" id="SSF50346">
    <property type="entry name" value="PRC-barrel domain"/>
    <property type="match status" value="1"/>
</dbReference>
<dbReference type="SUPFAM" id="SSF50447">
    <property type="entry name" value="Translation proteins"/>
    <property type="match status" value="1"/>
</dbReference>
<evidence type="ECO:0000255" key="1">
    <source>
        <dbReference type="HAMAP-Rule" id="MF_00014"/>
    </source>
</evidence>
<name>RIMM_RICCN</name>
<organism>
    <name type="scientific">Rickettsia conorii (strain ATCC VR-613 / Malish 7)</name>
    <dbReference type="NCBI Taxonomy" id="272944"/>
    <lineage>
        <taxon>Bacteria</taxon>
        <taxon>Pseudomonadati</taxon>
        <taxon>Pseudomonadota</taxon>
        <taxon>Alphaproteobacteria</taxon>
        <taxon>Rickettsiales</taxon>
        <taxon>Rickettsiaceae</taxon>
        <taxon>Rickettsieae</taxon>
        <taxon>Rickettsia</taxon>
        <taxon>spotted fever group</taxon>
    </lineage>
</organism>
<proteinExistence type="inferred from homology"/>
<protein>
    <recommendedName>
        <fullName evidence="1">Ribosome maturation factor RimM</fullName>
    </recommendedName>
</protein>
<gene>
    <name evidence="1" type="primary">rimM</name>
    <name type="ordered locus">RC0473</name>
</gene>
<keyword id="KW-0143">Chaperone</keyword>
<keyword id="KW-0963">Cytoplasm</keyword>
<keyword id="KW-0690">Ribosome biogenesis</keyword>
<keyword id="KW-0698">rRNA processing</keyword>
<accession>Q92IE7</accession>
<reference key="1">
    <citation type="journal article" date="2001" name="Science">
        <title>Mechanisms of evolution in Rickettsia conorii and R. prowazekii.</title>
        <authorList>
            <person name="Ogata H."/>
            <person name="Audic S."/>
            <person name="Renesto-Audiffren P."/>
            <person name="Fournier P.-E."/>
            <person name="Barbe V."/>
            <person name="Samson D."/>
            <person name="Roux V."/>
            <person name="Cossart P."/>
            <person name="Weissenbach J."/>
            <person name="Claverie J.-M."/>
            <person name="Raoult D."/>
        </authorList>
    </citation>
    <scope>NUCLEOTIDE SEQUENCE [LARGE SCALE GENOMIC DNA]</scope>
    <source>
        <strain>ATCC VR-613 / Malish 7</strain>
    </source>
</reference>
<feature type="chain" id="PRO_0000163342" description="Ribosome maturation factor RimM">
    <location>
        <begin position="1"/>
        <end position="165"/>
    </location>
</feature>
<feature type="domain" description="PRC barrel" evidence="1">
    <location>
        <begin position="94"/>
        <end position="165"/>
    </location>
</feature>
<sequence length="165" mass="18705">MNSLENLILVGVIKSCHGIKGHVMLKSFTDPATKILERNLVNESGANIHIKLISQNAKGELICTFNDIATRNEAENLKGYKIFCLRASLPELEEDEFYIADLTHLPVLNQDHKEIGKIKNILNFGAGDIIEIEFSNQTTELLPFNKEFFPIITKDYVILNYQREA</sequence>
<comment type="function">
    <text evidence="1">An accessory protein needed during the final step in the assembly of 30S ribosomal subunit, possibly for assembly of the head region. Essential for efficient processing of 16S rRNA. May be needed both before and after RbfA during the maturation of 16S rRNA. It has affinity for free ribosomal 30S subunits but not for 70S ribosomes.</text>
</comment>
<comment type="subunit">
    <text evidence="1">Binds ribosomal protein uS19.</text>
</comment>
<comment type="subcellular location">
    <subcellularLocation>
        <location evidence="1">Cytoplasm</location>
    </subcellularLocation>
</comment>
<comment type="domain">
    <text evidence="1">The PRC barrel domain binds ribosomal protein uS19.</text>
</comment>
<comment type="similarity">
    <text evidence="1">Belongs to the RimM family.</text>
</comment>